<gene>
    <name type="primary">Stam</name>
    <name type="synonym">Stam1</name>
</gene>
<reference key="1">
    <citation type="journal article" date="1996" name="Biochem. Biophys. Res. Commun.">
        <title>Cloning of a novel signal-transducing adaptor molecule containing an SH3 domain and ITAM.</title>
        <authorList>
            <person name="Takeshita T."/>
            <person name="Arita T."/>
            <person name="Asao H."/>
            <person name="Tanaka N."/>
            <person name="Higuchi M."/>
            <person name="Kuroda H."/>
            <person name="Kaneko K."/>
            <person name="Munakata H."/>
            <person name="Endo Y."/>
            <person name="Fujita T."/>
            <person name="Sugamura K."/>
        </authorList>
    </citation>
    <scope>NUCLEOTIDE SEQUENCE [MRNA]</scope>
    <scope>TISSUE SPECIFICITY</scope>
    <source>
        <tissue>T-cell</tissue>
    </source>
</reference>
<reference key="2">
    <citation type="journal article" date="2004" name="Genome Res.">
        <title>The status, quality, and expansion of the NIH full-length cDNA project: the Mammalian Gene Collection (MGC).</title>
        <authorList>
            <consortium name="The MGC Project Team"/>
        </authorList>
    </citation>
    <scope>NUCLEOTIDE SEQUENCE [LARGE SCALE MRNA]</scope>
    <source>
        <strain>C57BL/6J</strain>
        <strain>FVB/N</strain>
        <tissue>Mammary tumor</tissue>
    </source>
</reference>
<reference key="3">
    <citation type="journal article" date="2001" name="Mol. Cell. Biol.">
        <title>Loss of hippocampal CA3 pyramidal neurons in mice lacking STAM1.</title>
        <authorList>
            <person name="Yamada M."/>
            <person name="Takeshita T."/>
            <person name="Miura S."/>
            <person name="Murata K."/>
            <person name="Kimura Y."/>
            <person name="Ishii N."/>
            <person name="Nose M."/>
            <person name="Sakagami H."/>
            <person name="Kondo H."/>
            <person name="Tashiro F."/>
            <person name="Miyazaki J."/>
            <person name="Sasaki H."/>
            <person name="Sugamura K."/>
        </authorList>
    </citation>
    <scope>DISRUPTION PHENOTYPE</scope>
</reference>
<reference key="4">
    <citation type="journal article" date="2002" name="Mol. Cell. Biol.">
        <title>Signal-transducing adaptor molecules STAM1 and STAM2 are required for T-cell development and survival.</title>
        <authorList>
            <person name="Yamada M."/>
            <person name="Ishii N."/>
            <person name="Asao H."/>
            <person name="Murata K."/>
            <person name="Kanazawa C."/>
            <person name="Sasaki H."/>
            <person name="Sugamura K."/>
        </authorList>
    </citation>
    <scope>DISRUPTION PHENOTYPE</scope>
</reference>
<reference key="5">
    <citation type="journal article" date="2009" name="Structure">
        <title>Hybrid structural model of the complete human ESCRT-0 complex.</title>
        <authorList>
            <person name="Ren X."/>
            <person name="Kloer D.P."/>
            <person name="Kim Y.C."/>
            <person name="Ghirlando R."/>
            <person name="Saidi L.F."/>
            <person name="Hummer G."/>
            <person name="Hurley J.H."/>
        </authorList>
    </citation>
    <scope>INTERACTION WITH HGS</scope>
</reference>
<reference key="6">
    <citation type="journal article" date="2010" name="Cell">
        <title>A tissue-specific atlas of mouse protein phosphorylation and expression.</title>
        <authorList>
            <person name="Huttlin E.L."/>
            <person name="Jedrychowski M.P."/>
            <person name="Elias J.E."/>
            <person name="Goswami T."/>
            <person name="Rad R."/>
            <person name="Beausoleil S.A."/>
            <person name="Villen J."/>
            <person name="Haas W."/>
            <person name="Sowa M.E."/>
            <person name="Gygi S.P."/>
        </authorList>
    </citation>
    <scope>IDENTIFICATION BY MASS SPECTROMETRY [LARGE SCALE ANALYSIS]</scope>
    <source>
        <tissue>Brain</tissue>
        <tissue>Brown adipose tissue</tissue>
        <tissue>Heart</tissue>
        <tissue>Kidney</tissue>
        <tissue>Liver</tissue>
        <tissue>Lung</tissue>
        <tissue>Pancreas</tissue>
        <tissue>Spleen</tissue>
    </source>
</reference>
<name>STAM1_MOUSE</name>
<dbReference type="EMBL" id="U43900">
    <property type="protein sequence ID" value="AAC52840.1"/>
    <property type="molecule type" value="mRNA"/>
</dbReference>
<dbReference type="EMBL" id="BC044666">
    <property type="protein sequence ID" value="AAH44666.1"/>
    <property type="molecule type" value="mRNA"/>
</dbReference>
<dbReference type="EMBL" id="BC055326">
    <property type="protein sequence ID" value="AAH55326.1"/>
    <property type="molecule type" value="mRNA"/>
</dbReference>
<dbReference type="CCDS" id="CCDS15698.1"/>
<dbReference type="PIR" id="JC4917">
    <property type="entry name" value="JC4917"/>
</dbReference>
<dbReference type="RefSeq" id="NP_035614.1">
    <property type="nucleotide sequence ID" value="NM_011484.4"/>
</dbReference>
<dbReference type="BMRB" id="P70297"/>
<dbReference type="SMR" id="P70297"/>
<dbReference type="BioGRID" id="203519">
    <property type="interactions" value="13"/>
</dbReference>
<dbReference type="FunCoup" id="P70297">
    <property type="interactions" value="4044"/>
</dbReference>
<dbReference type="IntAct" id="P70297">
    <property type="interactions" value="1"/>
</dbReference>
<dbReference type="MINT" id="P70297"/>
<dbReference type="STRING" id="10090.ENSMUSP00000100025"/>
<dbReference type="GlyGen" id="P70297">
    <property type="glycosylation" value="3 sites, 1 O-linked glycan (2 sites)"/>
</dbReference>
<dbReference type="iPTMnet" id="P70297"/>
<dbReference type="PhosphoSitePlus" id="P70297"/>
<dbReference type="SwissPalm" id="P70297"/>
<dbReference type="jPOST" id="P70297"/>
<dbReference type="PaxDb" id="10090-ENSMUSP00000100025"/>
<dbReference type="PeptideAtlas" id="P70297"/>
<dbReference type="ProteomicsDB" id="258637"/>
<dbReference type="Pumba" id="P70297"/>
<dbReference type="Antibodypedia" id="25306">
    <property type="antibodies" value="356 antibodies from 34 providers"/>
</dbReference>
<dbReference type="DNASU" id="20844"/>
<dbReference type="Ensembl" id="ENSMUST00000102960.11">
    <property type="protein sequence ID" value="ENSMUSP00000100025.5"/>
    <property type="gene ID" value="ENSMUSG00000026718.18"/>
</dbReference>
<dbReference type="GeneID" id="20844"/>
<dbReference type="KEGG" id="mmu:20844"/>
<dbReference type="UCSC" id="uc008ikh.1">
    <property type="organism name" value="mouse"/>
</dbReference>
<dbReference type="AGR" id="MGI:1329014"/>
<dbReference type="CTD" id="8027"/>
<dbReference type="MGI" id="MGI:1329014">
    <property type="gene designation" value="Stam"/>
</dbReference>
<dbReference type="VEuPathDB" id="HostDB:ENSMUSG00000026718"/>
<dbReference type="eggNOG" id="KOG2199">
    <property type="taxonomic scope" value="Eukaryota"/>
</dbReference>
<dbReference type="GeneTree" id="ENSGT00940000157171"/>
<dbReference type="HOGENOM" id="CLU_010104_0_2_1"/>
<dbReference type="InParanoid" id="P70297"/>
<dbReference type="OMA" id="QVYRDWW"/>
<dbReference type="OrthoDB" id="10068368at2759"/>
<dbReference type="PhylomeDB" id="P70297"/>
<dbReference type="TreeFam" id="TF315007"/>
<dbReference type="Reactome" id="R-MMU-182971">
    <property type="pathway name" value="EGFR downregulation"/>
</dbReference>
<dbReference type="Reactome" id="R-MMU-5689901">
    <property type="pathway name" value="Metalloprotease DUBs"/>
</dbReference>
<dbReference type="Reactome" id="R-MMU-6807004">
    <property type="pathway name" value="Negative regulation of MET activity"/>
</dbReference>
<dbReference type="Reactome" id="R-MMU-8856825">
    <property type="pathway name" value="Cargo recognition for clathrin-mediated endocytosis"/>
</dbReference>
<dbReference type="Reactome" id="R-MMU-8856828">
    <property type="pathway name" value="Clathrin-mediated endocytosis"/>
</dbReference>
<dbReference type="Reactome" id="R-MMU-9013420">
    <property type="pathway name" value="RHOU GTPase cycle"/>
</dbReference>
<dbReference type="Reactome" id="R-MMU-917729">
    <property type="pathway name" value="Endosomal Sorting Complex Required For Transport (ESCRT)"/>
</dbReference>
<dbReference type="BioGRID-ORCS" id="20844">
    <property type="hits" value="5 hits in 75 CRISPR screens"/>
</dbReference>
<dbReference type="ChiTaRS" id="Stam">
    <property type="organism name" value="mouse"/>
</dbReference>
<dbReference type="PRO" id="PR:P70297"/>
<dbReference type="Proteomes" id="UP000000589">
    <property type="component" value="Chromosome 2"/>
</dbReference>
<dbReference type="RNAct" id="P70297">
    <property type="molecule type" value="protein"/>
</dbReference>
<dbReference type="Bgee" id="ENSMUSG00000026718">
    <property type="expression patterns" value="Expressed in embryonic brain and 269 other cell types or tissues"/>
</dbReference>
<dbReference type="ExpressionAtlas" id="P70297">
    <property type="expression patterns" value="baseline and differential"/>
</dbReference>
<dbReference type="GO" id="GO:0005829">
    <property type="term" value="C:cytosol"/>
    <property type="evidence" value="ECO:0007669"/>
    <property type="project" value="Ensembl"/>
</dbReference>
<dbReference type="GO" id="GO:0031901">
    <property type="term" value="C:early endosome membrane"/>
    <property type="evidence" value="ECO:0007669"/>
    <property type="project" value="UniProtKB-SubCell"/>
</dbReference>
<dbReference type="GO" id="GO:0033565">
    <property type="term" value="C:ESCRT-0 complex"/>
    <property type="evidence" value="ECO:0007669"/>
    <property type="project" value="Ensembl"/>
</dbReference>
<dbReference type="GO" id="GO:0035091">
    <property type="term" value="F:phosphatidylinositol binding"/>
    <property type="evidence" value="ECO:0007669"/>
    <property type="project" value="InterPro"/>
</dbReference>
<dbReference type="GO" id="GO:0043130">
    <property type="term" value="F:ubiquitin binding"/>
    <property type="evidence" value="ECO:0007669"/>
    <property type="project" value="InterPro"/>
</dbReference>
<dbReference type="GO" id="GO:0044389">
    <property type="term" value="F:ubiquitin-like protein ligase binding"/>
    <property type="evidence" value="ECO:0007669"/>
    <property type="project" value="Ensembl"/>
</dbReference>
<dbReference type="GO" id="GO:1903543">
    <property type="term" value="P:positive regulation of exosomal secretion"/>
    <property type="evidence" value="ECO:0007669"/>
    <property type="project" value="Ensembl"/>
</dbReference>
<dbReference type="GO" id="GO:0015031">
    <property type="term" value="P:protein transport"/>
    <property type="evidence" value="ECO:0007669"/>
    <property type="project" value="UniProtKB-KW"/>
</dbReference>
<dbReference type="GO" id="GO:1903551">
    <property type="term" value="P:regulation of extracellular exosome assembly"/>
    <property type="evidence" value="ECO:0007669"/>
    <property type="project" value="Ensembl"/>
</dbReference>
<dbReference type="CDD" id="cd21389">
    <property type="entry name" value="GAT_STAM1"/>
    <property type="match status" value="1"/>
</dbReference>
<dbReference type="CDD" id="cd11964">
    <property type="entry name" value="SH3_STAM1"/>
    <property type="match status" value="1"/>
</dbReference>
<dbReference type="CDD" id="cd17000">
    <property type="entry name" value="VHS_STAM1"/>
    <property type="match status" value="1"/>
</dbReference>
<dbReference type="FunFam" id="1.25.40.90:FF:000009">
    <property type="entry name" value="Putative signal transducing adapter molecule 1"/>
    <property type="match status" value="1"/>
</dbReference>
<dbReference type="FunFam" id="1.20.5.1940:FF:000002">
    <property type="entry name" value="Signal transducing adapter molecule 1"/>
    <property type="match status" value="1"/>
</dbReference>
<dbReference type="FunFam" id="2.30.30.40:FF:000086">
    <property type="entry name" value="signal transducing adapter molecule 2"/>
    <property type="match status" value="1"/>
</dbReference>
<dbReference type="Gene3D" id="1.20.5.1940">
    <property type="match status" value="1"/>
</dbReference>
<dbReference type="Gene3D" id="1.25.40.90">
    <property type="match status" value="1"/>
</dbReference>
<dbReference type="Gene3D" id="2.30.30.40">
    <property type="entry name" value="SH3 Domains"/>
    <property type="match status" value="1"/>
</dbReference>
<dbReference type="InterPro" id="IPR008942">
    <property type="entry name" value="ENTH_VHS"/>
</dbReference>
<dbReference type="InterPro" id="IPR047492">
    <property type="entry name" value="GAT_STAM1"/>
</dbReference>
<dbReference type="InterPro" id="IPR036028">
    <property type="entry name" value="SH3-like_dom_sf"/>
</dbReference>
<dbReference type="InterPro" id="IPR001452">
    <property type="entry name" value="SH3_domain"/>
</dbReference>
<dbReference type="InterPro" id="IPR050670">
    <property type="entry name" value="STAM"/>
</dbReference>
<dbReference type="InterPro" id="IPR035657">
    <property type="entry name" value="STAM1_SH3"/>
</dbReference>
<dbReference type="InterPro" id="IPR003903">
    <property type="entry name" value="UIM_dom"/>
</dbReference>
<dbReference type="InterPro" id="IPR002014">
    <property type="entry name" value="VHS_dom"/>
</dbReference>
<dbReference type="InterPro" id="IPR047528">
    <property type="entry name" value="VHS_STAM1"/>
</dbReference>
<dbReference type="PANTHER" id="PTHR45929">
    <property type="entry name" value="JAK PATHWAY SIGNAL TRANSDUCTION ADAPTOR MOLECULE"/>
    <property type="match status" value="1"/>
</dbReference>
<dbReference type="PANTHER" id="PTHR45929:SF2">
    <property type="entry name" value="SIGNAL TRANSDUCING ADAPTER MOLECULE 1"/>
    <property type="match status" value="1"/>
</dbReference>
<dbReference type="Pfam" id="PF00018">
    <property type="entry name" value="SH3_1"/>
    <property type="match status" value="1"/>
</dbReference>
<dbReference type="Pfam" id="PF02809">
    <property type="entry name" value="UIM"/>
    <property type="match status" value="1"/>
</dbReference>
<dbReference type="Pfam" id="PF00790">
    <property type="entry name" value="VHS"/>
    <property type="match status" value="1"/>
</dbReference>
<dbReference type="PRINTS" id="PR00499">
    <property type="entry name" value="P67PHOX"/>
</dbReference>
<dbReference type="PRINTS" id="PR00452">
    <property type="entry name" value="SH3DOMAIN"/>
</dbReference>
<dbReference type="SMART" id="SM00326">
    <property type="entry name" value="SH3"/>
    <property type="match status" value="1"/>
</dbReference>
<dbReference type="SMART" id="SM00288">
    <property type="entry name" value="VHS"/>
    <property type="match status" value="1"/>
</dbReference>
<dbReference type="SUPFAM" id="SSF48464">
    <property type="entry name" value="ENTH/VHS domain"/>
    <property type="match status" value="1"/>
</dbReference>
<dbReference type="SUPFAM" id="SSF50044">
    <property type="entry name" value="SH3-domain"/>
    <property type="match status" value="1"/>
</dbReference>
<dbReference type="PROSITE" id="PS50002">
    <property type="entry name" value="SH3"/>
    <property type="match status" value="1"/>
</dbReference>
<dbReference type="PROSITE" id="PS50330">
    <property type="entry name" value="UIM"/>
    <property type="match status" value="1"/>
</dbReference>
<dbReference type="PROSITE" id="PS50179">
    <property type="entry name" value="VHS"/>
    <property type="match status" value="1"/>
</dbReference>
<accession>P70297</accession>
<sequence length="548" mass="59771">MPLFATNPFDQDVEKATSELNTAEDWGLILDICDKVGQSRTGPKDCLRSIMRRVNHKDPHVAMQALTLLGACVSNCGKIFHLEVCSRDFASEVSNVLNKGHPKVCEKLKALMVEWTDEFKNDPQLSLISAMIKNLKEQGVTFPAIGSQAAEQAKASPALVAKDPGTVATKKEEEDLAKAIELSLKEQRQQSAPVSTLYPSTSNLLTNHQHEGRKVRAVYDFEAAEDNELTFKAGEIITVLDDSDPNWWKGETHQGVGLFPSNFVTADLTAEPEMIKTEKKTVQFNDDVQIETIEPEPEPAFIDEDKMDQLLQMLQSTDPSDNQPDLPELLHLEAMCHQMGPLIDEKLEDIDRKHSELSELNVKVMEALSLYTKLMNEDPMYSMYAKLQSQQYYLQSSAVSASQVYPGPAQSGTYLVAGSAQMTHLQSYSLPPEQLSSISQGAVPSSANQALPSQQTQASYPNAMVSSVQGNSYPSQASIYSPPAAAAAAAAAAVVPVPVPADVTIYQNAGPTMSQVPNYTLTSSTLPQTGGSQQPPQPQQAYSQKALL</sequence>
<feature type="chain" id="PRO_0000190146" description="Signal transducing adapter molecule 1">
    <location>
        <begin position="1"/>
        <end position="548"/>
    </location>
</feature>
<feature type="domain" description="VHS" evidence="5">
    <location>
        <begin position="16"/>
        <end position="143"/>
    </location>
</feature>
<feature type="domain" description="UIM" evidence="4">
    <location>
        <begin position="171"/>
        <end position="190"/>
    </location>
</feature>
<feature type="domain" description="SH3" evidence="3">
    <location>
        <begin position="210"/>
        <end position="269"/>
    </location>
</feature>
<feature type="domain" description="ITAM">
    <location>
        <begin position="369"/>
        <end position="386"/>
    </location>
</feature>
<feature type="region of interest" description="Disordered" evidence="6">
    <location>
        <begin position="436"/>
        <end position="458"/>
    </location>
</feature>
<feature type="region of interest" description="Disordered" evidence="6">
    <location>
        <begin position="517"/>
        <end position="548"/>
    </location>
</feature>
<feature type="compositionally biased region" description="Polar residues" evidence="6">
    <location>
        <begin position="517"/>
        <end position="532"/>
    </location>
</feature>
<feature type="modified residue" description="Phosphoserine" evidence="2">
    <location>
        <position position="156"/>
    </location>
</feature>
<feature type="modified residue" description="Phosphotyrosine" evidence="2">
    <location>
        <position position="198"/>
    </location>
</feature>
<feature type="modified residue" description="Phosphotyrosine" evidence="2">
    <location>
        <position position="381"/>
    </location>
</feature>
<feature type="modified residue" description="Phosphotyrosine" evidence="2">
    <location>
        <position position="384"/>
    </location>
</feature>
<feature type="cross-link" description="Glycyl lysine isopeptide (Lys-Gly) (interchain with G-Cter in SUMO2)" evidence="2">
    <location>
        <position position="276"/>
    </location>
</feature>
<organism>
    <name type="scientific">Mus musculus</name>
    <name type="common">Mouse</name>
    <dbReference type="NCBI Taxonomy" id="10090"/>
    <lineage>
        <taxon>Eukaryota</taxon>
        <taxon>Metazoa</taxon>
        <taxon>Chordata</taxon>
        <taxon>Craniata</taxon>
        <taxon>Vertebrata</taxon>
        <taxon>Euteleostomi</taxon>
        <taxon>Mammalia</taxon>
        <taxon>Eutheria</taxon>
        <taxon>Euarchontoglires</taxon>
        <taxon>Glires</taxon>
        <taxon>Rodentia</taxon>
        <taxon>Myomorpha</taxon>
        <taxon>Muroidea</taxon>
        <taxon>Muridae</taxon>
        <taxon>Murinae</taxon>
        <taxon>Mus</taxon>
        <taxon>Mus</taxon>
    </lineage>
</organism>
<evidence type="ECO:0000250" key="1"/>
<evidence type="ECO:0000250" key="2">
    <source>
        <dbReference type="UniProtKB" id="Q92783"/>
    </source>
</evidence>
<evidence type="ECO:0000255" key="3">
    <source>
        <dbReference type="PROSITE-ProRule" id="PRU00192"/>
    </source>
</evidence>
<evidence type="ECO:0000255" key="4">
    <source>
        <dbReference type="PROSITE-ProRule" id="PRU00213"/>
    </source>
</evidence>
<evidence type="ECO:0000255" key="5">
    <source>
        <dbReference type="PROSITE-ProRule" id="PRU00218"/>
    </source>
</evidence>
<evidence type="ECO:0000256" key="6">
    <source>
        <dbReference type="SAM" id="MobiDB-lite"/>
    </source>
</evidence>
<evidence type="ECO:0000269" key="7">
    <source>
    </source>
</evidence>
<evidence type="ECO:0000269" key="8">
    <source>
    </source>
</evidence>
<evidence type="ECO:0000269" key="9">
    <source>
    </source>
</evidence>
<evidence type="ECO:0000269" key="10">
    <source>
    </source>
</evidence>
<evidence type="ECO:0000305" key="11"/>
<keyword id="KW-0963">Cytoplasm</keyword>
<keyword id="KW-0967">Endosome</keyword>
<keyword id="KW-1017">Isopeptide bond</keyword>
<keyword id="KW-0472">Membrane</keyword>
<keyword id="KW-0597">Phosphoprotein</keyword>
<keyword id="KW-0653">Protein transport</keyword>
<keyword id="KW-1185">Reference proteome</keyword>
<keyword id="KW-0728">SH3 domain</keyword>
<keyword id="KW-0813">Transport</keyword>
<keyword id="KW-0832">Ubl conjugation</keyword>
<comment type="function">
    <text evidence="1">Involved in intracellular signal transduction mediated by cytokines and growth factors. Upon IL-2 and GM-CSL stimulation, it plays a role in signaling leading to DNA synthesis and MYC induction. May also play a role in T-cell development. Involved in down-regulation of receptor tyrosine kinase via multivesicular body (MVBs) when complexed with HGS (ESCRT-0 complex). The ESCRT-0 complex binds ubiquitin and acts as a sorting machinery that recognizes ubiquitinated receptors and transfers them to further sequential lysosomal sorting/trafficking processes (By similarity).</text>
</comment>
<comment type="subunit">
    <text evidence="2 9">Component of the ESCRT-0 complex composed of STAM or STAM2 and HGS (PubMed:19278655). Probably part of a complex at least composed of HSG, STAM and EPS15 (By similarity). Found in a complex with HGS and E3 ligase ITCH and DTX3L (By similarity). Interacts with E3 ligase DTX3L; the interaction brings together STAM and HSG, promotes their recruitment to early endosomes and decreases STAM and HGS ubiquitination by ITCH (By similarity). Interacts with STAMBP/AMSH (By similarity). Interacts with PDGFRB (By similarity). Interacts with LITAF; the interaction is direct (By similarity). Identified in a complex with HGS and LITAF (By similarity). Interacts with HAVCR1 (By similarity).</text>
</comment>
<comment type="subcellular location">
    <subcellularLocation>
        <location evidence="11">Cytoplasm</location>
    </subcellularLocation>
    <subcellularLocation>
        <location evidence="2">Early endosome membrane</location>
        <topology evidence="2">Peripheral membrane protein</topology>
        <orientation evidence="2">Cytoplasmic side</orientation>
    </subcellularLocation>
</comment>
<comment type="tissue specificity">
    <text evidence="10">Ubiquitously expressed. Enriched expression in synaptic vesicles.</text>
</comment>
<comment type="developmental stage">
    <text>No change during brain development.</text>
</comment>
<comment type="domain">
    <text evidence="2">The VHS domain mediates high-avidity binding to Lys63-linked and Lys48-linked polyubiquitinated cargos.</text>
</comment>
<comment type="PTM">
    <text evidence="2">Phosphorylated on Tyr-198. Phosphorylated in response to IL2, IL3, IL4, IL7, CSF2/GM-CSF, EGF and PDGFB. Phosphorylated by activated PDGFRB (By similarity).</text>
</comment>
<comment type="PTM">
    <text evidence="2">Ubiquitinated by ITCH.</text>
</comment>
<comment type="disruption phenotype">
    <text evidence="7 8">Mice display disappearance of hippocampal CA3 pyramidal neurons as well as growth retardation in the third week after birth. Adult mice lacking Stam and Stam2 due to inducible gene targeting exhibit significant reduction in T-cell development in the thymus and profound reduction in the peripheral mature T-cells.</text>
</comment>
<comment type="similarity">
    <text evidence="11">Belongs to the STAM family.</text>
</comment>
<protein>
    <recommendedName>
        <fullName>Signal transducing adapter molecule 1</fullName>
        <shortName>STAM-1</shortName>
    </recommendedName>
</protein>
<proteinExistence type="evidence at protein level"/>